<accession>B7LGK8</accession>
<name>SFSA_ECO55</name>
<keyword id="KW-0238">DNA-binding</keyword>
<keyword id="KW-1185">Reference proteome</keyword>
<proteinExistence type="inferred from homology"/>
<feature type="chain" id="PRO_1000196970" description="Sugar fermentation stimulation protein A">
    <location>
        <begin position="1"/>
        <end position="234"/>
    </location>
</feature>
<feature type="DNA-binding region" description="H-T-H motif" evidence="1">
    <location>
        <begin position="201"/>
        <end position="220"/>
    </location>
</feature>
<dbReference type="EMBL" id="CU928145">
    <property type="protein sequence ID" value="CAU96027.1"/>
    <property type="molecule type" value="Genomic_DNA"/>
</dbReference>
<dbReference type="RefSeq" id="WP_000396036.1">
    <property type="nucleotide sequence ID" value="NC_011748.1"/>
</dbReference>
<dbReference type="SMR" id="B7LGK8"/>
<dbReference type="GeneID" id="75202039"/>
<dbReference type="KEGG" id="eck:EC55989_0140"/>
<dbReference type="HOGENOM" id="CLU_052299_2_0_6"/>
<dbReference type="Proteomes" id="UP000000746">
    <property type="component" value="Chromosome"/>
</dbReference>
<dbReference type="GO" id="GO:0003677">
    <property type="term" value="F:DNA binding"/>
    <property type="evidence" value="ECO:0007669"/>
    <property type="project" value="UniProtKB-KW"/>
</dbReference>
<dbReference type="CDD" id="cd22359">
    <property type="entry name" value="SfsA-like_bacterial"/>
    <property type="match status" value="1"/>
</dbReference>
<dbReference type="FunFam" id="2.40.50.580:FF:000001">
    <property type="entry name" value="Sugar fermentation stimulation protein A"/>
    <property type="match status" value="1"/>
</dbReference>
<dbReference type="FunFam" id="3.40.1350.60:FF:000001">
    <property type="entry name" value="Sugar fermentation stimulation protein A"/>
    <property type="match status" value="1"/>
</dbReference>
<dbReference type="Gene3D" id="2.40.50.580">
    <property type="match status" value="1"/>
</dbReference>
<dbReference type="Gene3D" id="3.40.1350.60">
    <property type="match status" value="1"/>
</dbReference>
<dbReference type="HAMAP" id="MF_00095">
    <property type="entry name" value="SfsA"/>
    <property type="match status" value="1"/>
</dbReference>
<dbReference type="InterPro" id="IPR005224">
    <property type="entry name" value="SfsA"/>
</dbReference>
<dbReference type="InterPro" id="IPR040452">
    <property type="entry name" value="SfsA_C"/>
</dbReference>
<dbReference type="InterPro" id="IPR041465">
    <property type="entry name" value="SfsA_N"/>
</dbReference>
<dbReference type="NCBIfam" id="TIGR00230">
    <property type="entry name" value="sfsA"/>
    <property type="match status" value="1"/>
</dbReference>
<dbReference type="PANTHER" id="PTHR30545">
    <property type="entry name" value="SUGAR FERMENTATION STIMULATION PROTEIN A"/>
    <property type="match status" value="1"/>
</dbReference>
<dbReference type="PANTHER" id="PTHR30545:SF2">
    <property type="entry name" value="SUGAR FERMENTATION STIMULATION PROTEIN A"/>
    <property type="match status" value="1"/>
</dbReference>
<dbReference type="Pfam" id="PF03749">
    <property type="entry name" value="SfsA"/>
    <property type="match status" value="1"/>
</dbReference>
<dbReference type="Pfam" id="PF17746">
    <property type="entry name" value="SfsA_N"/>
    <property type="match status" value="1"/>
</dbReference>
<evidence type="ECO:0000255" key="1">
    <source>
        <dbReference type="HAMAP-Rule" id="MF_00095"/>
    </source>
</evidence>
<sequence>MEFSPPLQRATLIQRYKRFLADVITPDGRELTLHCPNTGAMTGCATPGDTVWYSTSDNTKRKYPHTWELTQSQSGAFICVNTLWANRLTKEAILNESISELSGYSSLKSEVKYGAERSRIDFMLQADSRPDCYIEVKSVTLAENEQGYFPDAVTERGQKHLRELMSVAAEGQRAVIFFAVLHSAITRFSPARHIDEKYAQLLSEAQQRGVEILAYKAEISAEGMALKKSLPVTL</sequence>
<reference key="1">
    <citation type="journal article" date="2009" name="PLoS Genet.">
        <title>Organised genome dynamics in the Escherichia coli species results in highly diverse adaptive paths.</title>
        <authorList>
            <person name="Touchon M."/>
            <person name="Hoede C."/>
            <person name="Tenaillon O."/>
            <person name="Barbe V."/>
            <person name="Baeriswyl S."/>
            <person name="Bidet P."/>
            <person name="Bingen E."/>
            <person name="Bonacorsi S."/>
            <person name="Bouchier C."/>
            <person name="Bouvet O."/>
            <person name="Calteau A."/>
            <person name="Chiapello H."/>
            <person name="Clermont O."/>
            <person name="Cruveiller S."/>
            <person name="Danchin A."/>
            <person name="Diard M."/>
            <person name="Dossat C."/>
            <person name="Karoui M.E."/>
            <person name="Frapy E."/>
            <person name="Garry L."/>
            <person name="Ghigo J.M."/>
            <person name="Gilles A.M."/>
            <person name="Johnson J."/>
            <person name="Le Bouguenec C."/>
            <person name="Lescat M."/>
            <person name="Mangenot S."/>
            <person name="Martinez-Jehanne V."/>
            <person name="Matic I."/>
            <person name="Nassif X."/>
            <person name="Oztas S."/>
            <person name="Petit M.A."/>
            <person name="Pichon C."/>
            <person name="Rouy Z."/>
            <person name="Ruf C.S."/>
            <person name="Schneider D."/>
            <person name="Tourret J."/>
            <person name="Vacherie B."/>
            <person name="Vallenet D."/>
            <person name="Medigue C."/>
            <person name="Rocha E.P.C."/>
            <person name="Denamur E."/>
        </authorList>
    </citation>
    <scope>NUCLEOTIDE SEQUENCE [LARGE SCALE GENOMIC DNA]</scope>
    <source>
        <strain>55989 / EAEC</strain>
    </source>
</reference>
<organism>
    <name type="scientific">Escherichia coli (strain 55989 / EAEC)</name>
    <dbReference type="NCBI Taxonomy" id="585055"/>
    <lineage>
        <taxon>Bacteria</taxon>
        <taxon>Pseudomonadati</taxon>
        <taxon>Pseudomonadota</taxon>
        <taxon>Gammaproteobacteria</taxon>
        <taxon>Enterobacterales</taxon>
        <taxon>Enterobacteriaceae</taxon>
        <taxon>Escherichia</taxon>
    </lineage>
</organism>
<protein>
    <recommendedName>
        <fullName evidence="1">Sugar fermentation stimulation protein A</fullName>
    </recommendedName>
</protein>
<comment type="function">
    <text evidence="1">Binds to DNA non-specifically. Could be a regulatory factor involved in maltose metabolism.</text>
</comment>
<comment type="similarity">
    <text evidence="1">Belongs to the SfsA family.</text>
</comment>
<gene>
    <name evidence="1" type="primary">sfsA</name>
    <name type="ordered locus">EC55989_0140</name>
</gene>